<evidence type="ECO:0000255" key="1">
    <source>
        <dbReference type="HAMAP-Rule" id="MF_00178"/>
    </source>
</evidence>
<name>RISB_GEOMG</name>
<reference key="1">
    <citation type="journal article" date="2009" name="BMC Microbiol.">
        <title>The genome sequence of Geobacter metallireducens: features of metabolism, physiology and regulation common and dissimilar to Geobacter sulfurreducens.</title>
        <authorList>
            <person name="Aklujkar M."/>
            <person name="Krushkal J."/>
            <person name="DiBartolo G."/>
            <person name="Lapidus A."/>
            <person name="Land M.L."/>
            <person name="Lovley D.R."/>
        </authorList>
    </citation>
    <scope>NUCLEOTIDE SEQUENCE [LARGE SCALE GENOMIC DNA]</scope>
    <source>
        <strain>ATCC 53774 / DSM 7210 / GS-15</strain>
    </source>
</reference>
<organism>
    <name type="scientific">Geobacter metallireducens (strain ATCC 53774 / DSM 7210 / GS-15)</name>
    <dbReference type="NCBI Taxonomy" id="269799"/>
    <lineage>
        <taxon>Bacteria</taxon>
        <taxon>Pseudomonadati</taxon>
        <taxon>Thermodesulfobacteriota</taxon>
        <taxon>Desulfuromonadia</taxon>
        <taxon>Geobacterales</taxon>
        <taxon>Geobacteraceae</taxon>
        <taxon>Geobacter</taxon>
    </lineage>
</organism>
<feature type="chain" id="PRO_1000040424" description="6,7-dimethyl-8-ribityllumazine synthase">
    <location>
        <begin position="1"/>
        <end position="155"/>
    </location>
</feature>
<feature type="active site" description="Proton donor" evidence="1">
    <location>
        <position position="89"/>
    </location>
</feature>
<feature type="binding site" evidence="1">
    <location>
        <position position="23"/>
    </location>
    <ligand>
        <name>5-amino-6-(D-ribitylamino)uracil</name>
        <dbReference type="ChEBI" id="CHEBI:15934"/>
    </ligand>
</feature>
<feature type="binding site" evidence="1">
    <location>
        <begin position="57"/>
        <end position="59"/>
    </location>
    <ligand>
        <name>5-amino-6-(D-ribitylamino)uracil</name>
        <dbReference type="ChEBI" id="CHEBI:15934"/>
    </ligand>
</feature>
<feature type="binding site" evidence="1">
    <location>
        <begin position="81"/>
        <end position="83"/>
    </location>
    <ligand>
        <name>5-amino-6-(D-ribitylamino)uracil</name>
        <dbReference type="ChEBI" id="CHEBI:15934"/>
    </ligand>
</feature>
<feature type="binding site" evidence="1">
    <location>
        <begin position="86"/>
        <end position="87"/>
    </location>
    <ligand>
        <name>(2S)-2-hydroxy-3-oxobutyl phosphate</name>
        <dbReference type="ChEBI" id="CHEBI:58830"/>
    </ligand>
</feature>
<feature type="binding site" evidence="1">
    <location>
        <position position="114"/>
    </location>
    <ligand>
        <name>5-amino-6-(D-ribitylamino)uracil</name>
        <dbReference type="ChEBI" id="CHEBI:15934"/>
    </ligand>
</feature>
<feature type="binding site" evidence="1">
    <location>
        <position position="128"/>
    </location>
    <ligand>
        <name>(2S)-2-hydroxy-3-oxobutyl phosphate</name>
        <dbReference type="ChEBI" id="CHEBI:58830"/>
    </ligand>
</feature>
<comment type="function">
    <text evidence="1">Catalyzes the formation of 6,7-dimethyl-8-ribityllumazine by condensation of 5-amino-6-(D-ribitylamino)uracil with 3,4-dihydroxy-2-butanone 4-phosphate. This is the penultimate step in the biosynthesis of riboflavin.</text>
</comment>
<comment type="catalytic activity">
    <reaction evidence="1">
        <text>(2S)-2-hydroxy-3-oxobutyl phosphate + 5-amino-6-(D-ribitylamino)uracil = 6,7-dimethyl-8-(1-D-ribityl)lumazine + phosphate + 2 H2O + H(+)</text>
        <dbReference type="Rhea" id="RHEA:26152"/>
        <dbReference type="ChEBI" id="CHEBI:15377"/>
        <dbReference type="ChEBI" id="CHEBI:15378"/>
        <dbReference type="ChEBI" id="CHEBI:15934"/>
        <dbReference type="ChEBI" id="CHEBI:43474"/>
        <dbReference type="ChEBI" id="CHEBI:58201"/>
        <dbReference type="ChEBI" id="CHEBI:58830"/>
        <dbReference type="EC" id="2.5.1.78"/>
    </reaction>
</comment>
<comment type="pathway">
    <text evidence="1">Cofactor biosynthesis; riboflavin biosynthesis; riboflavin from 2-hydroxy-3-oxobutyl phosphate and 5-amino-6-(D-ribitylamino)uracil: step 1/2.</text>
</comment>
<comment type="similarity">
    <text evidence="1">Belongs to the DMRL synthase family.</text>
</comment>
<keyword id="KW-1185">Reference proteome</keyword>
<keyword id="KW-0686">Riboflavin biosynthesis</keyword>
<keyword id="KW-0808">Transferase</keyword>
<proteinExistence type="inferred from homology"/>
<sequence>MPRFIEGKLDATGLKFGIIVGRFNSFIGERLLEGALDALVRNGADEATIDVARVPGAFEIPLTAKKMAQTGSYDAIICLGAVIRGSTPHFDYVAAEVSKGVAHVSLETGVPVSFGVLTTDTIEQAVERAGTKAGNKGFDAAMTAIETVRVFREFR</sequence>
<protein>
    <recommendedName>
        <fullName evidence="1">6,7-dimethyl-8-ribityllumazine synthase</fullName>
        <shortName evidence="1">DMRL synthase</shortName>
        <shortName evidence="1">LS</shortName>
        <shortName evidence="1">Lumazine synthase</shortName>
        <ecNumber evidence="1">2.5.1.78</ecNumber>
    </recommendedName>
</protein>
<accession>Q39V66</accession>
<gene>
    <name evidence="1" type="primary">ribH</name>
    <name type="ordered locus">Gmet_1627</name>
</gene>
<dbReference type="EC" id="2.5.1.78" evidence="1"/>
<dbReference type="EMBL" id="CP000148">
    <property type="protein sequence ID" value="ABB31858.1"/>
    <property type="molecule type" value="Genomic_DNA"/>
</dbReference>
<dbReference type="SMR" id="Q39V66"/>
<dbReference type="STRING" id="269799.Gmet_1627"/>
<dbReference type="KEGG" id="gme:Gmet_1627"/>
<dbReference type="eggNOG" id="COG0054">
    <property type="taxonomic scope" value="Bacteria"/>
</dbReference>
<dbReference type="HOGENOM" id="CLU_089358_1_1_7"/>
<dbReference type="UniPathway" id="UPA00275">
    <property type="reaction ID" value="UER00404"/>
</dbReference>
<dbReference type="Proteomes" id="UP000007073">
    <property type="component" value="Chromosome"/>
</dbReference>
<dbReference type="GO" id="GO:0005829">
    <property type="term" value="C:cytosol"/>
    <property type="evidence" value="ECO:0007669"/>
    <property type="project" value="TreeGrafter"/>
</dbReference>
<dbReference type="GO" id="GO:0009349">
    <property type="term" value="C:riboflavin synthase complex"/>
    <property type="evidence" value="ECO:0007669"/>
    <property type="project" value="InterPro"/>
</dbReference>
<dbReference type="GO" id="GO:0000906">
    <property type="term" value="F:6,7-dimethyl-8-ribityllumazine synthase activity"/>
    <property type="evidence" value="ECO:0007669"/>
    <property type="project" value="UniProtKB-UniRule"/>
</dbReference>
<dbReference type="GO" id="GO:0009231">
    <property type="term" value="P:riboflavin biosynthetic process"/>
    <property type="evidence" value="ECO:0007669"/>
    <property type="project" value="UniProtKB-UniRule"/>
</dbReference>
<dbReference type="CDD" id="cd09209">
    <property type="entry name" value="Lumazine_synthase-I"/>
    <property type="match status" value="1"/>
</dbReference>
<dbReference type="FunFam" id="3.40.50.960:FF:000001">
    <property type="entry name" value="6,7-dimethyl-8-ribityllumazine synthase"/>
    <property type="match status" value="1"/>
</dbReference>
<dbReference type="Gene3D" id="3.40.50.960">
    <property type="entry name" value="Lumazine/riboflavin synthase"/>
    <property type="match status" value="1"/>
</dbReference>
<dbReference type="HAMAP" id="MF_00178">
    <property type="entry name" value="Lumazine_synth"/>
    <property type="match status" value="1"/>
</dbReference>
<dbReference type="InterPro" id="IPR034964">
    <property type="entry name" value="LS"/>
</dbReference>
<dbReference type="InterPro" id="IPR002180">
    <property type="entry name" value="LS/RS"/>
</dbReference>
<dbReference type="InterPro" id="IPR036467">
    <property type="entry name" value="LS/RS_sf"/>
</dbReference>
<dbReference type="NCBIfam" id="TIGR00114">
    <property type="entry name" value="lumazine-synth"/>
    <property type="match status" value="1"/>
</dbReference>
<dbReference type="NCBIfam" id="NF000812">
    <property type="entry name" value="PRK00061.1-4"/>
    <property type="match status" value="1"/>
</dbReference>
<dbReference type="PANTHER" id="PTHR21058:SF0">
    <property type="entry name" value="6,7-DIMETHYL-8-RIBITYLLUMAZINE SYNTHASE"/>
    <property type="match status" value="1"/>
</dbReference>
<dbReference type="PANTHER" id="PTHR21058">
    <property type="entry name" value="6,7-DIMETHYL-8-RIBITYLLUMAZINE SYNTHASE DMRL SYNTHASE LUMAZINE SYNTHASE"/>
    <property type="match status" value="1"/>
</dbReference>
<dbReference type="Pfam" id="PF00885">
    <property type="entry name" value="DMRL_synthase"/>
    <property type="match status" value="1"/>
</dbReference>
<dbReference type="SUPFAM" id="SSF52121">
    <property type="entry name" value="Lumazine synthase"/>
    <property type="match status" value="1"/>
</dbReference>